<proteinExistence type="inferred from homology"/>
<keyword id="KW-0997">Cell inner membrane</keyword>
<keyword id="KW-1003">Cell membrane</keyword>
<keyword id="KW-0472">Membrane</keyword>
<keyword id="KW-1185">Reference proteome</keyword>
<protein>
    <recommendedName>
        <fullName evidence="1">Putative membrane protein insertion efficiency factor</fullName>
    </recommendedName>
</protein>
<dbReference type="EMBL" id="AE001273">
    <property type="protein sequence ID" value="AAC68073.1"/>
    <property type="molecule type" value="Genomic_DNA"/>
</dbReference>
<dbReference type="PIR" id="F71509">
    <property type="entry name" value="F71509"/>
</dbReference>
<dbReference type="RefSeq" id="NP_219986.1">
    <property type="nucleotide sequence ID" value="NC_000117.1"/>
</dbReference>
<dbReference type="FunCoup" id="O84479">
    <property type="interactions" value="149"/>
</dbReference>
<dbReference type="STRING" id="272561.CT_473"/>
<dbReference type="EnsemblBacteria" id="AAC68073">
    <property type="protein sequence ID" value="AAC68073"/>
    <property type="gene ID" value="CT_473"/>
</dbReference>
<dbReference type="GeneID" id="884203"/>
<dbReference type="KEGG" id="ctr:CT_473"/>
<dbReference type="PATRIC" id="fig|272561.5.peg.512"/>
<dbReference type="HOGENOM" id="CLU_144811_2_1_0"/>
<dbReference type="InParanoid" id="O84479"/>
<dbReference type="OrthoDB" id="9801753at2"/>
<dbReference type="Proteomes" id="UP000000431">
    <property type="component" value="Chromosome"/>
</dbReference>
<dbReference type="GO" id="GO:0005886">
    <property type="term" value="C:plasma membrane"/>
    <property type="evidence" value="ECO:0007669"/>
    <property type="project" value="UniProtKB-SubCell"/>
</dbReference>
<dbReference type="HAMAP" id="MF_00386">
    <property type="entry name" value="UPF0161_YidD"/>
    <property type="match status" value="1"/>
</dbReference>
<dbReference type="InterPro" id="IPR002696">
    <property type="entry name" value="Membr_insert_effic_factor_YidD"/>
</dbReference>
<dbReference type="NCBIfam" id="TIGR00278">
    <property type="entry name" value="membrane protein insertion efficiency factor YidD"/>
    <property type="match status" value="1"/>
</dbReference>
<dbReference type="PANTHER" id="PTHR33383">
    <property type="entry name" value="MEMBRANE PROTEIN INSERTION EFFICIENCY FACTOR-RELATED"/>
    <property type="match status" value="1"/>
</dbReference>
<dbReference type="PANTHER" id="PTHR33383:SF1">
    <property type="entry name" value="MEMBRANE PROTEIN INSERTION EFFICIENCY FACTOR-RELATED"/>
    <property type="match status" value="1"/>
</dbReference>
<dbReference type="Pfam" id="PF01809">
    <property type="entry name" value="YidD"/>
    <property type="match status" value="1"/>
</dbReference>
<dbReference type="SMART" id="SM01234">
    <property type="entry name" value="Haemolytic"/>
    <property type="match status" value="1"/>
</dbReference>
<reference key="1">
    <citation type="journal article" date="1998" name="Science">
        <title>Genome sequence of an obligate intracellular pathogen of humans: Chlamydia trachomatis.</title>
        <authorList>
            <person name="Stephens R.S."/>
            <person name="Kalman S."/>
            <person name="Lammel C.J."/>
            <person name="Fan J."/>
            <person name="Marathe R."/>
            <person name="Aravind L."/>
            <person name="Mitchell W.P."/>
            <person name="Olinger L."/>
            <person name="Tatusov R.L."/>
            <person name="Zhao Q."/>
            <person name="Koonin E.V."/>
            <person name="Davis R.W."/>
        </authorList>
    </citation>
    <scope>NUCLEOTIDE SEQUENCE [LARGE SCALE GENOMIC DNA]</scope>
    <source>
        <strain>ATCC VR-885 / DSM 19411 / UW-3/Cx</strain>
    </source>
</reference>
<sequence length="104" mass="11737">MQTSRISSFFRGLVHLYRWAISPFLGAPCRFFPTCSEYALVALKKHPLRKSLFLIAKRLLKCGPWCIGGIDLVPRTSVEEYLSSPTPLAESPDDRTVPHTQETS</sequence>
<organism>
    <name type="scientific">Chlamydia trachomatis serovar D (strain ATCC VR-885 / DSM 19411 / UW-3/Cx)</name>
    <dbReference type="NCBI Taxonomy" id="272561"/>
    <lineage>
        <taxon>Bacteria</taxon>
        <taxon>Pseudomonadati</taxon>
        <taxon>Chlamydiota</taxon>
        <taxon>Chlamydiia</taxon>
        <taxon>Chlamydiales</taxon>
        <taxon>Chlamydiaceae</taxon>
        <taxon>Chlamydia/Chlamydophila group</taxon>
        <taxon>Chlamydia</taxon>
    </lineage>
</organism>
<feature type="chain" id="PRO_0000171812" description="Putative membrane protein insertion efficiency factor">
    <location>
        <begin position="1"/>
        <end position="104"/>
    </location>
</feature>
<feature type="region of interest" description="Disordered" evidence="2">
    <location>
        <begin position="83"/>
        <end position="104"/>
    </location>
</feature>
<evidence type="ECO:0000255" key="1">
    <source>
        <dbReference type="HAMAP-Rule" id="MF_00386"/>
    </source>
</evidence>
<evidence type="ECO:0000256" key="2">
    <source>
        <dbReference type="SAM" id="MobiDB-lite"/>
    </source>
</evidence>
<gene>
    <name type="ordered locus">CT_473</name>
</gene>
<name>YIDD_CHLTR</name>
<accession>O84479</accession>
<comment type="function">
    <text evidence="1">Could be involved in insertion of integral membrane proteins into the membrane.</text>
</comment>
<comment type="subcellular location">
    <subcellularLocation>
        <location evidence="1">Cell inner membrane</location>
        <topology evidence="1">Peripheral membrane protein</topology>
        <orientation evidence="1">Cytoplasmic side</orientation>
    </subcellularLocation>
</comment>
<comment type="similarity">
    <text evidence="1">Belongs to the UPF0161 family.</text>
</comment>